<dbReference type="EC" id="1.16.3.1"/>
<dbReference type="EMBL" id="S77332">
    <property type="protein sequence ID" value="AAB34575.1"/>
    <property type="molecule type" value="mRNA"/>
</dbReference>
<dbReference type="RefSeq" id="NP_001117129.1">
    <property type="nucleotide sequence ID" value="NM_001123657.1"/>
</dbReference>
<dbReference type="SMR" id="P49946"/>
<dbReference type="STRING" id="8030.ENSSSAP00000050052"/>
<dbReference type="PaxDb" id="8030-ENSSSAP00000050052"/>
<dbReference type="GeneID" id="100136564"/>
<dbReference type="KEGG" id="sasa:100136564"/>
<dbReference type="OrthoDB" id="195568at7898"/>
<dbReference type="Proteomes" id="UP000087266">
    <property type="component" value="Chromosome ssa26"/>
</dbReference>
<dbReference type="Bgee" id="ENSSSAG00000049977">
    <property type="expression patterns" value="Expressed in intestine and 25 other cell types or tissues"/>
</dbReference>
<dbReference type="GO" id="GO:0005737">
    <property type="term" value="C:cytoplasm"/>
    <property type="evidence" value="ECO:0007669"/>
    <property type="project" value="TreeGrafter"/>
</dbReference>
<dbReference type="GO" id="GO:0008199">
    <property type="term" value="F:ferric iron binding"/>
    <property type="evidence" value="ECO:0007669"/>
    <property type="project" value="InterPro"/>
</dbReference>
<dbReference type="GO" id="GO:0008198">
    <property type="term" value="F:ferrous iron binding"/>
    <property type="evidence" value="ECO:0007669"/>
    <property type="project" value="TreeGrafter"/>
</dbReference>
<dbReference type="GO" id="GO:0004322">
    <property type="term" value="F:ferroxidase activity"/>
    <property type="evidence" value="ECO:0007669"/>
    <property type="project" value="UniProtKB-EC"/>
</dbReference>
<dbReference type="GO" id="GO:0006879">
    <property type="term" value="P:intracellular iron ion homeostasis"/>
    <property type="evidence" value="ECO:0007669"/>
    <property type="project" value="UniProtKB-KW"/>
</dbReference>
<dbReference type="GO" id="GO:0006826">
    <property type="term" value="P:iron ion transport"/>
    <property type="evidence" value="ECO:0007669"/>
    <property type="project" value="InterPro"/>
</dbReference>
<dbReference type="GO" id="GO:0110076">
    <property type="term" value="P:negative regulation of ferroptosis"/>
    <property type="evidence" value="ECO:0000250"/>
    <property type="project" value="UniProtKB"/>
</dbReference>
<dbReference type="CDD" id="cd01056">
    <property type="entry name" value="Euk_Ferritin"/>
    <property type="match status" value="1"/>
</dbReference>
<dbReference type="FunFam" id="1.20.1260.10:FF:000002">
    <property type="entry name" value="Ferritin, mitochondrial"/>
    <property type="match status" value="1"/>
</dbReference>
<dbReference type="Gene3D" id="1.20.1260.10">
    <property type="match status" value="1"/>
</dbReference>
<dbReference type="InterPro" id="IPR001519">
    <property type="entry name" value="Ferritin"/>
</dbReference>
<dbReference type="InterPro" id="IPR012347">
    <property type="entry name" value="Ferritin-like"/>
</dbReference>
<dbReference type="InterPro" id="IPR009040">
    <property type="entry name" value="Ferritin-like_diiron"/>
</dbReference>
<dbReference type="InterPro" id="IPR009078">
    <property type="entry name" value="Ferritin-like_SF"/>
</dbReference>
<dbReference type="InterPro" id="IPR014034">
    <property type="entry name" value="Ferritin_CS"/>
</dbReference>
<dbReference type="InterPro" id="IPR008331">
    <property type="entry name" value="Ferritin_DPS_dom"/>
</dbReference>
<dbReference type="PANTHER" id="PTHR11431">
    <property type="entry name" value="FERRITIN"/>
    <property type="match status" value="1"/>
</dbReference>
<dbReference type="PANTHER" id="PTHR11431:SF37">
    <property type="entry name" value="FERRITIN HEAVY CHAIN"/>
    <property type="match status" value="1"/>
</dbReference>
<dbReference type="Pfam" id="PF00210">
    <property type="entry name" value="Ferritin"/>
    <property type="match status" value="1"/>
</dbReference>
<dbReference type="SUPFAM" id="SSF47240">
    <property type="entry name" value="Ferritin-like"/>
    <property type="match status" value="1"/>
</dbReference>
<dbReference type="PROSITE" id="PS00540">
    <property type="entry name" value="FERRITIN_1"/>
    <property type="match status" value="1"/>
</dbReference>
<dbReference type="PROSITE" id="PS00204">
    <property type="entry name" value="FERRITIN_2"/>
    <property type="match status" value="1"/>
</dbReference>
<dbReference type="PROSITE" id="PS50905">
    <property type="entry name" value="FERRITIN_LIKE"/>
    <property type="match status" value="1"/>
</dbReference>
<accession>P49946</accession>
<protein>
    <recommendedName>
        <fullName>Ferritin, heavy subunit</fullName>
        <shortName>Ferritin H</shortName>
        <ecNumber>1.16.3.1</ecNumber>
    </recommendedName>
</protein>
<proteinExistence type="evidence at transcript level"/>
<reference key="1">
    <citation type="journal article" date="1995" name="Mol. Mar. Biol. Biotechnol.">
        <title>Two ferritin subunits of Atlantic salmon (Salmo salar): cloning of the liver cDNAs and antibody preparation.</title>
        <authorList>
            <person name="Andersen O."/>
            <person name="Dehli A."/>
            <person name="Standal H."/>
            <person name="Giskegjerde T.A."/>
            <person name="Karstensen R."/>
            <person name="Roervik K.A."/>
        </authorList>
    </citation>
    <scope>NUCLEOTIDE SEQUENCE [MRNA]</scope>
    <source>
        <tissue>Liver</tissue>
    </source>
</reference>
<evidence type="ECO:0000255" key="1">
    <source>
        <dbReference type="PROSITE-ProRule" id="PRU00085"/>
    </source>
</evidence>
<evidence type="ECO:0000305" key="2"/>
<sequence length="177" mass="20730">MTSQVRQNFHQDCEAAINRQINLELYASYVYLSMAYYFDRDDQALHNFAKFFKNQSHEEREHAEKLMKVQNQRGGRIFLQDVKKPEKDEWGSGVEALESSLQLEKSVNQSLLDLHKVCSEHNDPHMCDFIETHYLDEQVKSIKELGDWVTNLRRMGAPQNGMAEYLFDKHTLGKEST</sequence>
<keyword id="KW-0408">Iron</keyword>
<keyword id="KW-0409">Iron storage</keyword>
<keyword id="KW-0479">Metal-binding</keyword>
<keyword id="KW-0560">Oxidoreductase</keyword>
<keyword id="KW-1185">Reference proteome</keyword>
<feature type="chain" id="PRO_0000201075" description="Ferritin, heavy subunit">
    <location>
        <begin position="1"/>
        <end position="177"/>
    </location>
</feature>
<feature type="domain" description="Ferritin-like diiron" evidence="1">
    <location>
        <begin position="7"/>
        <end position="156"/>
    </location>
</feature>
<feature type="binding site" evidence="1">
    <location>
        <position position="24"/>
    </location>
    <ligand>
        <name>Fe cation</name>
        <dbReference type="ChEBI" id="CHEBI:24875"/>
        <label>1</label>
    </ligand>
</feature>
<feature type="binding site" evidence="1">
    <location>
        <position position="59"/>
    </location>
    <ligand>
        <name>Fe cation</name>
        <dbReference type="ChEBI" id="CHEBI:24875"/>
        <label>1</label>
    </ligand>
</feature>
<feature type="binding site" evidence="1">
    <location>
        <position position="59"/>
    </location>
    <ligand>
        <name>Fe cation</name>
        <dbReference type="ChEBI" id="CHEBI:24875"/>
        <label>2</label>
    </ligand>
</feature>
<feature type="binding site" evidence="1">
    <location>
        <position position="62"/>
    </location>
    <ligand>
        <name>Fe cation</name>
        <dbReference type="ChEBI" id="CHEBI:24875"/>
        <label>1</label>
    </ligand>
</feature>
<feature type="binding site" evidence="1">
    <location>
        <position position="104"/>
    </location>
    <ligand>
        <name>Fe cation</name>
        <dbReference type="ChEBI" id="CHEBI:24875"/>
        <label>2</label>
    </ligand>
</feature>
<feature type="binding site" evidence="1">
    <location>
        <position position="138"/>
    </location>
    <ligand>
        <name>Fe cation</name>
        <dbReference type="ChEBI" id="CHEBI:24875"/>
        <label>2</label>
    </ligand>
</feature>
<organism>
    <name type="scientific">Salmo salar</name>
    <name type="common">Atlantic salmon</name>
    <dbReference type="NCBI Taxonomy" id="8030"/>
    <lineage>
        <taxon>Eukaryota</taxon>
        <taxon>Metazoa</taxon>
        <taxon>Chordata</taxon>
        <taxon>Craniata</taxon>
        <taxon>Vertebrata</taxon>
        <taxon>Euteleostomi</taxon>
        <taxon>Actinopterygii</taxon>
        <taxon>Neopterygii</taxon>
        <taxon>Teleostei</taxon>
        <taxon>Protacanthopterygii</taxon>
        <taxon>Salmoniformes</taxon>
        <taxon>Salmonidae</taxon>
        <taxon>Salmoninae</taxon>
        <taxon>Salmo</taxon>
    </lineage>
</organism>
<name>FRIH_SALSA</name>
<comment type="function">
    <text>Stores iron in a soluble, non-toxic, readily available form. Important for iron homeostasis. Has ferroxidase activity. Iron is taken up in the ferrous form and deposited as ferric hydroxides after oxidation.</text>
</comment>
<comment type="catalytic activity">
    <reaction>
        <text>4 Fe(2+) + O2 + 4 H(+) = 4 Fe(3+) + 2 H2O</text>
        <dbReference type="Rhea" id="RHEA:11148"/>
        <dbReference type="ChEBI" id="CHEBI:15377"/>
        <dbReference type="ChEBI" id="CHEBI:15378"/>
        <dbReference type="ChEBI" id="CHEBI:15379"/>
        <dbReference type="ChEBI" id="CHEBI:29033"/>
        <dbReference type="ChEBI" id="CHEBI:29034"/>
        <dbReference type="EC" id="1.16.3.1"/>
    </reaction>
</comment>
<comment type="subunit">
    <text>Oligomer of 24 subunits. There are at least two types of subunits. The functional molecule forms a roughly spherical shell with a diameter of 12 nm and contains a central cavity into which the insoluble mineral iron core is deposited.</text>
</comment>
<comment type="tissue specificity">
    <text>Liver, gonads, head kidney, heart and spleen.</text>
</comment>
<comment type="similarity">
    <text evidence="2">Belongs to the ferritin family.</text>
</comment>